<evidence type="ECO:0000255" key="1">
    <source>
        <dbReference type="HAMAP-Rule" id="MF_00402"/>
    </source>
</evidence>
<evidence type="ECO:0000305" key="2"/>
<organism>
    <name type="scientific">Methylibium petroleiphilum (strain ATCC BAA-1232 / LMG 22953 / PM1)</name>
    <dbReference type="NCBI Taxonomy" id="420662"/>
    <lineage>
        <taxon>Bacteria</taxon>
        <taxon>Pseudomonadati</taxon>
        <taxon>Pseudomonadota</taxon>
        <taxon>Betaproteobacteria</taxon>
        <taxon>Burkholderiales</taxon>
        <taxon>Sphaerotilaceae</taxon>
        <taxon>Methylibium</taxon>
    </lineage>
</organism>
<dbReference type="EMBL" id="CP000555">
    <property type="protein sequence ID" value="ABM94068.1"/>
    <property type="molecule type" value="Genomic_DNA"/>
</dbReference>
<dbReference type="RefSeq" id="WP_011828705.1">
    <property type="nucleotide sequence ID" value="NC_008825.1"/>
</dbReference>
<dbReference type="SMR" id="A2SES9"/>
<dbReference type="STRING" id="420662.Mpe_A1107"/>
<dbReference type="KEGG" id="mpt:Mpe_A1107"/>
<dbReference type="eggNOG" id="COG0335">
    <property type="taxonomic scope" value="Bacteria"/>
</dbReference>
<dbReference type="HOGENOM" id="CLU_103507_1_0_4"/>
<dbReference type="Proteomes" id="UP000000366">
    <property type="component" value="Chromosome"/>
</dbReference>
<dbReference type="GO" id="GO:0022625">
    <property type="term" value="C:cytosolic large ribosomal subunit"/>
    <property type="evidence" value="ECO:0007669"/>
    <property type="project" value="TreeGrafter"/>
</dbReference>
<dbReference type="GO" id="GO:0003735">
    <property type="term" value="F:structural constituent of ribosome"/>
    <property type="evidence" value="ECO:0007669"/>
    <property type="project" value="InterPro"/>
</dbReference>
<dbReference type="GO" id="GO:0006412">
    <property type="term" value="P:translation"/>
    <property type="evidence" value="ECO:0007669"/>
    <property type="project" value="UniProtKB-UniRule"/>
</dbReference>
<dbReference type="FunFam" id="2.30.30.790:FF:000001">
    <property type="entry name" value="50S ribosomal protein L19"/>
    <property type="match status" value="1"/>
</dbReference>
<dbReference type="Gene3D" id="2.30.30.790">
    <property type="match status" value="1"/>
</dbReference>
<dbReference type="HAMAP" id="MF_00402">
    <property type="entry name" value="Ribosomal_bL19"/>
    <property type="match status" value="1"/>
</dbReference>
<dbReference type="InterPro" id="IPR001857">
    <property type="entry name" value="Ribosomal_bL19"/>
</dbReference>
<dbReference type="InterPro" id="IPR018257">
    <property type="entry name" value="Ribosomal_bL19_CS"/>
</dbReference>
<dbReference type="InterPro" id="IPR038657">
    <property type="entry name" value="Ribosomal_bL19_sf"/>
</dbReference>
<dbReference type="InterPro" id="IPR008991">
    <property type="entry name" value="Translation_prot_SH3-like_sf"/>
</dbReference>
<dbReference type="NCBIfam" id="TIGR01024">
    <property type="entry name" value="rplS_bact"/>
    <property type="match status" value="1"/>
</dbReference>
<dbReference type="PANTHER" id="PTHR15680:SF9">
    <property type="entry name" value="LARGE RIBOSOMAL SUBUNIT PROTEIN BL19M"/>
    <property type="match status" value="1"/>
</dbReference>
<dbReference type="PANTHER" id="PTHR15680">
    <property type="entry name" value="RIBOSOMAL PROTEIN L19"/>
    <property type="match status" value="1"/>
</dbReference>
<dbReference type="Pfam" id="PF01245">
    <property type="entry name" value="Ribosomal_L19"/>
    <property type="match status" value="1"/>
</dbReference>
<dbReference type="PIRSF" id="PIRSF002191">
    <property type="entry name" value="Ribosomal_L19"/>
    <property type="match status" value="1"/>
</dbReference>
<dbReference type="PRINTS" id="PR00061">
    <property type="entry name" value="RIBOSOMALL19"/>
</dbReference>
<dbReference type="SUPFAM" id="SSF50104">
    <property type="entry name" value="Translation proteins SH3-like domain"/>
    <property type="match status" value="1"/>
</dbReference>
<dbReference type="PROSITE" id="PS01015">
    <property type="entry name" value="RIBOSOMAL_L19"/>
    <property type="match status" value="1"/>
</dbReference>
<proteinExistence type="inferred from homology"/>
<sequence>MDLIQTLEQEEIARLNKTIPAFAPGDTVIVSVNVVEGTRKRLQAYEGVVIAKRNRGLNSSFIVRKISSGEGVERTFQLYSPLIASIEVKRRGDVRRAKLYYLRQRSGKSARIKEKLA</sequence>
<name>RL19_METPP</name>
<gene>
    <name evidence="1" type="primary">rplS</name>
    <name type="ordered locus">Mpe_A1107</name>
</gene>
<protein>
    <recommendedName>
        <fullName evidence="1">Large ribosomal subunit protein bL19</fullName>
    </recommendedName>
    <alternativeName>
        <fullName evidence="2">50S ribosomal protein L19</fullName>
    </alternativeName>
</protein>
<comment type="function">
    <text evidence="1">This protein is located at the 30S-50S ribosomal subunit interface and may play a role in the structure and function of the aminoacyl-tRNA binding site.</text>
</comment>
<comment type="similarity">
    <text evidence="1">Belongs to the bacterial ribosomal protein bL19 family.</text>
</comment>
<accession>A2SES9</accession>
<reference key="1">
    <citation type="journal article" date="2007" name="J. Bacteriol.">
        <title>Whole-genome analysis of the methyl tert-butyl ether-degrading beta-proteobacterium Methylibium petroleiphilum PM1.</title>
        <authorList>
            <person name="Kane S.R."/>
            <person name="Chakicherla A.Y."/>
            <person name="Chain P.S.G."/>
            <person name="Schmidt R."/>
            <person name="Shin M.W."/>
            <person name="Legler T.C."/>
            <person name="Scow K.M."/>
            <person name="Larimer F.W."/>
            <person name="Lucas S.M."/>
            <person name="Richardson P.M."/>
            <person name="Hristova K.R."/>
        </authorList>
    </citation>
    <scope>NUCLEOTIDE SEQUENCE [LARGE SCALE GENOMIC DNA]</scope>
    <source>
        <strain>ATCC BAA-1232 / LMG 22953 / PM1</strain>
    </source>
</reference>
<keyword id="KW-1185">Reference proteome</keyword>
<keyword id="KW-0687">Ribonucleoprotein</keyword>
<keyword id="KW-0689">Ribosomal protein</keyword>
<feature type="chain" id="PRO_1000049697" description="Large ribosomal subunit protein bL19">
    <location>
        <begin position="1"/>
        <end position="117"/>
    </location>
</feature>